<name>MTR1A_CHICK</name>
<evidence type="ECO:0000250" key="1"/>
<evidence type="ECO:0000255" key="2"/>
<evidence type="ECO:0000255" key="3">
    <source>
        <dbReference type="PROSITE-ProRule" id="PRU00521"/>
    </source>
</evidence>
<evidence type="ECO:0000256" key="4">
    <source>
        <dbReference type="SAM" id="MobiDB-lite"/>
    </source>
</evidence>
<dbReference type="EMBL" id="U31820">
    <property type="protein sequence ID" value="AAA92498.1"/>
    <property type="molecule type" value="mRNA"/>
</dbReference>
<dbReference type="RefSeq" id="NP_990693.1">
    <property type="nucleotide sequence ID" value="NM_205362.2"/>
</dbReference>
<dbReference type="SMR" id="P49285"/>
<dbReference type="FunCoup" id="P49285">
    <property type="interactions" value="139"/>
</dbReference>
<dbReference type="STRING" id="9031.ENSGALP00000022058"/>
<dbReference type="BindingDB" id="P49285"/>
<dbReference type="ChEMBL" id="CHEMBL2095154"/>
<dbReference type="DrugCentral" id="P49285"/>
<dbReference type="GlyGen" id="P49285">
    <property type="glycosylation" value="2 sites"/>
</dbReference>
<dbReference type="PaxDb" id="9031-ENSGALP00000022058"/>
<dbReference type="Ensembl" id="ENSGALT00010032089.1">
    <property type="protein sequence ID" value="ENSGALP00010018879.1"/>
    <property type="gene ID" value="ENSGALG00010013336.1"/>
</dbReference>
<dbReference type="GeneID" id="396319"/>
<dbReference type="KEGG" id="gga:396319"/>
<dbReference type="CTD" id="4543"/>
<dbReference type="VEuPathDB" id="HostDB:geneid_396319"/>
<dbReference type="eggNOG" id="KOG3656">
    <property type="taxonomic scope" value="Eukaryota"/>
</dbReference>
<dbReference type="GeneTree" id="ENSGT00940000160321"/>
<dbReference type="HOGENOM" id="CLU_009579_3_3_1"/>
<dbReference type="InParanoid" id="P49285"/>
<dbReference type="OMA" id="HCQISAF"/>
<dbReference type="OrthoDB" id="10044919at2759"/>
<dbReference type="PhylomeDB" id="P49285"/>
<dbReference type="TreeFam" id="TF331693"/>
<dbReference type="Reactome" id="R-GGA-373076">
    <property type="pathway name" value="Class A/1 (Rhodopsin-like receptors)"/>
</dbReference>
<dbReference type="Reactome" id="R-GGA-418594">
    <property type="pathway name" value="G alpha (i) signalling events"/>
</dbReference>
<dbReference type="PRO" id="PR:P49285"/>
<dbReference type="Proteomes" id="UP000000539">
    <property type="component" value="Chromosome 4"/>
</dbReference>
<dbReference type="GO" id="GO:0005886">
    <property type="term" value="C:plasma membrane"/>
    <property type="evidence" value="ECO:0000318"/>
    <property type="project" value="GO_Central"/>
</dbReference>
<dbReference type="GO" id="GO:0043235">
    <property type="term" value="C:receptor complex"/>
    <property type="evidence" value="ECO:0007669"/>
    <property type="project" value="Ensembl"/>
</dbReference>
<dbReference type="GO" id="GO:0004930">
    <property type="term" value="F:G protein-coupled receptor activity"/>
    <property type="evidence" value="ECO:0000318"/>
    <property type="project" value="GO_Central"/>
</dbReference>
<dbReference type="GO" id="GO:0042562">
    <property type="term" value="F:hormone binding"/>
    <property type="evidence" value="ECO:0007669"/>
    <property type="project" value="Ensembl"/>
</dbReference>
<dbReference type="GO" id="GO:1904408">
    <property type="term" value="F:melatonin binding"/>
    <property type="evidence" value="ECO:0000314"/>
    <property type="project" value="AgBase"/>
</dbReference>
<dbReference type="GO" id="GO:0008502">
    <property type="term" value="F:melatonin receptor activity"/>
    <property type="evidence" value="ECO:0007669"/>
    <property type="project" value="Ensembl"/>
</dbReference>
<dbReference type="GO" id="GO:0007193">
    <property type="term" value="P:adenylate cyclase-inhibiting G protein-coupled receptor signaling pathway"/>
    <property type="evidence" value="ECO:0007669"/>
    <property type="project" value="Ensembl"/>
</dbReference>
<dbReference type="GO" id="GO:0007186">
    <property type="term" value="P:G protein-coupled receptor signaling pathway"/>
    <property type="evidence" value="ECO:0000318"/>
    <property type="project" value="GO_Central"/>
</dbReference>
<dbReference type="GO" id="GO:0046325">
    <property type="term" value="P:negative regulation of D-glucose import"/>
    <property type="evidence" value="ECO:0000314"/>
    <property type="project" value="AgBase"/>
</dbReference>
<dbReference type="GO" id="GO:0045820">
    <property type="term" value="P:negative regulation of glycolytic process"/>
    <property type="evidence" value="ECO:0000314"/>
    <property type="project" value="AgBase"/>
</dbReference>
<dbReference type="CDD" id="cd15402">
    <property type="entry name" value="7tmA_Mel1A"/>
    <property type="match status" value="1"/>
</dbReference>
<dbReference type="FunFam" id="1.20.1070.10:FF:000056">
    <property type="entry name" value="Melatonin receptor type 1A"/>
    <property type="match status" value="1"/>
</dbReference>
<dbReference type="Gene3D" id="1.20.1070.10">
    <property type="entry name" value="Rhodopsin 7-helix transmembrane proteins"/>
    <property type="match status" value="1"/>
</dbReference>
<dbReference type="InterPro" id="IPR000276">
    <property type="entry name" value="GPCR_Rhodpsn"/>
</dbReference>
<dbReference type="InterPro" id="IPR017452">
    <property type="entry name" value="GPCR_Rhodpsn_7TM"/>
</dbReference>
<dbReference type="InterPro" id="IPR002278">
    <property type="entry name" value="Mel_1A/1B_rcpt"/>
</dbReference>
<dbReference type="InterPro" id="IPR000025">
    <property type="entry name" value="Melatonin_rcpt"/>
</dbReference>
<dbReference type="PANTHER" id="PTHR24228">
    <property type="entry name" value="B2 BRADYKININ RECEPTOR/ANGIOTENSIN II RECEPTOR"/>
    <property type="match status" value="1"/>
</dbReference>
<dbReference type="PANTHER" id="PTHR24228:SF53">
    <property type="entry name" value="MELATONIN RECEPTOR TYPE 1A"/>
    <property type="match status" value="1"/>
</dbReference>
<dbReference type="Pfam" id="PF00001">
    <property type="entry name" value="7tm_1"/>
    <property type="match status" value="1"/>
</dbReference>
<dbReference type="PRINTS" id="PR00237">
    <property type="entry name" value="GPCRRHODOPSN"/>
</dbReference>
<dbReference type="PRINTS" id="PR01149">
    <property type="entry name" value="MELATONIN1AR"/>
</dbReference>
<dbReference type="PRINTS" id="PR00857">
    <property type="entry name" value="MELATONINR"/>
</dbReference>
<dbReference type="SMART" id="SM01381">
    <property type="entry name" value="7TM_GPCR_Srsx"/>
    <property type="match status" value="1"/>
</dbReference>
<dbReference type="SUPFAM" id="SSF81321">
    <property type="entry name" value="Family A G protein-coupled receptor-like"/>
    <property type="match status" value="1"/>
</dbReference>
<dbReference type="PROSITE" id="PS00237">
    <property type="entry name" value="G_PROTEIN_RECEP_F1_1"/>
    <property type="match status" value="1"/>
</dbReference>
<dbReference type="PROSITE" id="PS50262">
    <property type="entry name" value="G_PROTEIN_RECEP_F1_2"/>
    <property type="match status" value="1"/>
</dbReference>
<organism>
    <name type="scientific">Gallus gallus</name>
    <name type="common">Chicken</name>
    <dbReference type="NCBI Taxonomy" id="9031"/>
    <lineage>
        <taxon>Eukaryota</taxon>
        <taxon>Metazoa</taxon>
        <taxon>Chordata</taxon>
        <taxon>Craniata</taxon>
        <taxon>Vertebrata</taxon>
        <taxon>Euteleostomi</taxon>
        <taxon>Archelosauria</taxon>
        <taxon>Archosauria</taxon>
        <taxon>Dinosauria</taxon>
        <taxon>Saurischia</taxon>
        <taxon>Theropoda</taxon>
        <taxon>Coelurosauria</taxon>
        <taxon>Aves</taxon>
        <taxon>Neognathae</taxon>
        <taxon>Galloanserae</taxon>
        <taxon>Galliformes</taxon>
        <taxon>Phasianidae</taxon>
        <taxon>Phasianinae</taxon>
        <taxon>Gallus</taxon>
    </lineage>
</organism>
<proteinExistence type="evidence at transcript level"/>
<reference key="1">
    <citation type="journal article" date="1995" name="Neuron">
        <title>Melatonin receptors are for the birds: molecular analysis of two receptor subtypes differentially expressed in chick brain.</title>
        <authorList>
            <person name="Reppert S.M."/>
            <person name="Weaver D.R."/>
            <person name="Cassone V.M."/>
            <person name="Godson C."/>
            <person name="Kolakowski L.F. Jr."/>
        </authorList>
    </citation>
    <scope>NUCLEOTIDE SEQUENCE [MRNA]</scope>
</reference>
<comment type="function">
    <text evidence="1">High affinity receptor for melatonin. The activity of this receptor is mediated by pertussis toxin sensitive G proteins that inhibits adenylate cyclase activity (By similarity).</text>
</comment>
<comment type="subcellular location">
    <subcellularLocation>
        <location>Cell membrane</location>
        <topology>Multi-pass membrane protein</topology>
    </subcellularLocation>
</comment>
<comment type="tissue specificity">
    <text>Expressed in optic tectum and retina, less in neostriatum, hypothalamus and thalamus.</text>
</comment>
<comment type="similarity">
    <text evidence="3">Belongs to the G-protein coupled receptor 1 family.</text>
</comment>
<sequence>MRANGSELNGTVLPRDPPAEGSPRRPPWVTSTLATILIFTIVVDLLGNLLVILSVYRNKKLRNAGNIFVVSLAIADLVVAIYPYPLVLTSVFHNGWNLGYLHCQISGFLMGLSVIGSIFNITGIAINRYCYICHSLKYDKLYSDKNSLCYVGLIWVLTVVAIVPNLFVGSLQYDPRIYSCTFAQSVSSAYTIAVVFFHFILPIAIVTYCYLRIWILVIQVRRRVKPDNNPRLKPHDFRNFVTMFVVFVLFAVCWAPLNFIGLAVAVDPETIIPRIPEWLFVSSYYMAYFNSCLNAIIYGLLNQNFRREYKKIVVSFCTAKAFFQDSSNDAADRIRSKPSPLITNNNQVKVDSV</sequence>
<feature type="chain" id="PRO_0000069868" description="Melatonin receptor type 1A">
    <location>
        <begin position="1"/>
        <end position="353"/>
    </location>
</feature>
<feature type="topological domain" description="Extracellular" evidence="2">
    <location>
        <begin position="1"/>
        <end position="32"/>
    </location>
</feature>
<feature type="transmembrane region" description="Helical; Name=1" evidence="2">
    <location>
        <begin position="33"/>
        <end position="53"/>
    </location>
</feature>
<feature type="topological domain" description="Cytoplasmic" evidence="2">
    <location>
        <begin position="54"/>
        <end position="66"/>
    </location>
</feature>
<feature type="transmembrane region" description="Helical; Name=2" evidence="2">
    <location>
        <begin position="67"/>
        <end position="87"/>
    </location>
</feature>
<feature type="topological domain" description="Extracellular" evidence="2">
    <location>
        <begin position="88"/>
        <end position="105"/>
    </location>
</feature>
<feature type="transmembrane region" description="Helical; Name=3" evidence="2">
    <location>
        <begin position="106"/>
        <end position="126"/>
    </location>
</feature>
<feature type="topological domain" description="Cytoplasmic" evidence="2">
    <location>
        <begin position="127"/>
        <end position="145"/>
    </location>
</feature>
<feature type="transmembrane region" description="Helical; Name=4" evidence="2">
    <location>
        <begin position="146"/>
        <end position="166"/>
    </location>
</feature>
<feature type="topological domain" description="Extracellular" evidence="2">
    <location>
        <begin position="167"/>
        <end position="190"/>
    </location>
</feature>
<feature type="transmembrane region" description="Helical; Name=5" evidence="2">
    <location>
        <begin position="191"/>
        <end position="211"/>
    </location>
</feature>
<feature type="topological domain" description="Cytoplasmic" evidence="2">
    <location>
        <begin position="212"/>
        <end position="243"/>
    </location>
</feature>
<feature type="transmembrane region" description="Helical; Name=6" evidence="2">
    <location>
        <begin position="244"/>
        <end position="264"/>
    </location>
</feature>
<feature type="topological domain" description="Extracellular" evidence="2">
    <location>
        <begin position="265"/>
        <end position="277"/>
    </location>
</feature>
<feature type="transmembrane region" description="Helical; Name=7" evidence="2">
    <location>
        <begin position="278"/>
        <end position="298"/>
    </location>
</feature>
<feature type="topological domain" description="Cytoplasmic" evidence="2">
    <location>
        <begin position="299"/>
        <end position="353"/>
    </location>
</feature>
<feature type="region of interest" description="Disordered" evidence="4">
    <location>
        <begin position="1"/>
        <end position="26"/>
    </location>
</feature>
<feature type="glycosylation site" description="N-linked (GlcNAc...) asparagine" evidence="2">
    <location>
        <position position="4"/>
    </location>
</feature>
<feature type="glycosylation site" description="N-linked (GlcNAc...) asparagine" evidence="2">
    <location>
        <position position="9"/>
    </location>
</feature>
<feature type="disulfide bond" evidence="3">
    <location>
        <begin position="103"/>
        <end position="180"/>
    </location>
</feature>
<protein>
    <recommendedName>
        <fullName>Melatonin receptor type 1A</fullName>
        <shortName>Mel-1A-R</shortName>
        <shortName>Mel1a receptor</shortName>
    </recommendedName>
    <alternativeName>
        <fullName>CKA</fullName>
    </alternativeName>
</protein>
<accession>P49285</accession>
<keyword id="KW-1003">Cell membrane</keyword>
<keyword id="KW-1015">Disulfide bond</keyword>
<keyword id="KW-0297">G-protein coupled receptor</keyword>
<keyword id="KW-0325">Glycoprotein</keyword>
<keyword id="KW-0472">Membrane</keyword>
<keyword id="KW-0675">Receptor</keyword>
<keyword id="KW-1185">Reference proteome</keyword>
<keyword id="KW-0807">Transducer</keyword>
<keyword id="KW-0812">Transmembrane</keyword>
<keyword id="KW-1133">Transmembrane helix</keyword>